<organism>
    <name type="scientific">Xylella fastidiosa (strain 9a5c)</name>
    <dbReference type="NCBI Taxonomy" id="160492"/>
    <lineage>
        <taxon>Bacteria</taxon>
        <taxon>Pseudomonadati</taxon>
        <taxon>Pseudomonadota</taxon>
        <taxon>Gammaproteobacteria</taxon>
        <taxon>Lysobacterales</taxon>
        <taxon>Lysobacteraceae</taxon>
        <taxon>Xylella</taxon>
    </lineage>
</organism>
<comment type="function">
    <text evidence="1">Is required not only for elongation of protein synthesis but also for the initiation of all mRNA translation through initiator tRNA(fMet) aminoacylation.</text>
</comment>
<comment type="catalytic activity">
    <reaction evidence="1">
        <text>tRNA(Met) + L-methionine + ATP = L-methionyl-tRNA(Met) + AMP + diphosphate</text>
        <dbReference type="Rhea" id="RHEA:13481"/>
        <dbReference type="Rhea" id="RHEA-COMP:9667"/>
        <dbReference type="Rhea" id="RHEA-COMP:9698"/>
        <dbReference type="ChEBI" id="CHEBI:30616"/>
        <dbReference type="ChEBI" id="CHEBI:33019"/>
        <dbReference type="ChEBI" id="CHEBI:57844"/>
        <dbReference type="ChEBI" id="CHEBI:78442"/>
        <dbReference type="ChEBI" id="CHEBI:78530"/>
        <dbReference type="ChEBI" id="CHEBI:456215"/>
        <dbReference type="EC" id="6.1.1.10"/>
    </reaction>
</comment>
<comment type="cofactor">
    <cofactor evidence="1">
        <name>Zn(2+)</name>
        <dbReference type="ChEBI" id="CHEBI:29105"/>
    </cofactor>
    <text evidence="1">Binds 1 zinc ion per subunit.</text>
</comment>
<comment type="subunit">
    <text evidence="1">Homodimer.</text>
</comment>
<comment type="subcellular location">
    <subcellularLocation>
        <location evidence="1">Cytoplasm</location>
    </subcellularLocation>
</comment>
<comment type="similarity">
    <text evidence="1">Belongs to the class-I aminoacyl-tRNA synthetase family. MetG type 1 subfamily.</text>
</comment>
<name>SYM_XYLFA</name>
<keyword id="KW-0030">Aminoacyl-tRNA synthetase</keyword>
<keyword id="KW-0067">ATP-binding</keyword>
<keyword id="KW-0963">Cytoplasm</keyword>
<keyword id="KW-0436">Ligase</keyword>
<keyword id="KW-0479">Metal-binding</keyword>
<keyword id="KW-0547">Nucleotide-binding</keyword>
<keyword id="KW-0648">Protein biosynthesis</keyword>
<keyword id="KW-0694">RNA-binding</keyword>
<keyword id="KW-0820">tRNA-binding</keyword>
<keyword id="KW-0862">Zinc</keyword>
<feature type="chain" id="PRO_0000139178" description="Methionine--tRNA ligase">
    <location>
        <begin position="1"/>
        <end position="702"/>
    </location>
</feature>
<feature type="domain" description="tRNA-binding" evidence="1">
    <location>
        <begin position="599"/>
        <end position="702"/>
    </location>
</feature>
<feature type="region of interest" description="Disordered" evidence="2">
    <location>
        <begin position="562"/>
        <end position="593"/>
    </location>
</feature>
<feature type="short sequence motif" description="'HIGH' region">
    <location>
        <begin position="23"/>
        <end position="33"/>
    </location>
</feature>
<feature type="short sequence motif" description="'KMSKS' region">
    <location>
        <begin position="341"/>
        <end position="345"/>
    </location>
</feature>
<feature type="compositionally biased region" description="Polar residues" evidence="2">
    <location>
        <begin position="569"/>
        <end position="578"/>
    </location>
</feature>
<feature type="binding site" evidence="1">
    <location>
        <position position="154"/>
    </location>
    <ligand>
        <name>Zn(2+)</name>
        <dbReference type="ChEBI" id="CHEBI:29105"/>
    </ligand>
</feature>
<feature type="binding site" evidence="1">
    <location>
        <position position="157"/>
    </location>
    <ligand>
        <name>Zn(2+)</name>
        <dbReference type="ChEBI" id="CHEBI:29105"/>
    </ligand>
</feature>
<feature type="binding site" evidence="1">
    <location>
        <position position="167"/>
    </location>
    <ligand>
        <name>Zn(2+)</name>
        <dbReference type="ChEBI" id="CHEBI:29105"/>
    </ligand>
</feature>
<feature type="binding site" evidence="1">
    <location>
        <position position="170"/>
    </location>
    <ligand>
        <name>Zn(2+)</name>
        <dbReference type="ChEBI" id="CHEBI:29105"/>
    </ligand>
</feature>
<feature type="binding site" evidence="1">
    <location>
        <position position="344"/>
    </location>
    <ligand>
        <name>ATP</name>
        <dbReference type="ChEBI" id="CHEBI:30616"/>
    </ligand>
</feature>
<sequence>MPYSHPLVPLSFMTTALVTTALPYANGPLHLGHLVGYIQADIWVRARRLGGHNTWFVCADDTHGTPIMLAAEKAGMPPEAFIATTQASHERDFAAFNVAFDHYDSTHSPVNRHLTEQSYLTLKQAGHITCRSVAQFYDPAKGMFLPDRYVKGTCPNCGATDQYGDNCEACGATYDPTELKNPYSVISGTTPELRDSEHFFFEVAHFDTFLRHWLSGDVALPSVKNKLKEWLDAKGGLRPWDISRDAPYFGFEIPNQPGKYFYVWLDAPIGYLCSFKTLCTRIGEDFDTHLRSGTTTELHHFIGKDIVNFHALFWPAVLHGTGHRAPTRLHVNGYLTVDGAKMSKSRGTFIMARTYLDAGLEPDALRYYFAAKSSGDVDDLDLNLSDFVARVNADLVGKLVNLASRCASFIGTRFNGQLADTLPDRIQYDQFVAALTPIRDAYERNDTASAIRQTMQLADEANKYIDETKPWIIAKQHNADAQLHAVCTQGLNLFRVLITALKPILPHTSIQAETFLAAPVTAWQDVNQPLIGGHTIHPYSPLFTRIDKKVIEVMINASKDTLAPPPASAKQQNASMSNTAPPPTAEKPETTAPTIGIDDFAKLDLRIGKVLVCEYVEGSDKLLRFELDAGPLGKRQIFSGIRASYSNPETLIGRNVVFIANLAPRKMRFGISQGMILSAGFDSGTLALLDADSSAQPGMPVR</sequence>
<evidence type="ECO:0000255" key="1">
    <source>
        <dbReference type="HAMAP-Rule" id="MF_00098"/>
    </source>
</evidence>
<evidence type="ECO:0000256" key="2">
    <source>
        <dbReference type="SAM" id="MobiDB-lite"/>
    </source>
</evidence>
<dbReference type="EC" id="6.1.1.10" evidence="1"/>
<dbReference type="EMBL" id="AE003849">
    <property type="protein sequence ID" value="AAF83359.1"/>
    <property type="molecule type" value="Genomic_DNA"/>
</dbReference>
<dbReference type="PIR" id="C82792">
    <property type="entry name" value="C82792"/>
</dbReference>
<dbReference type="SMR" id="Q9PFV8"/>
<dbReference type="STRING" id="160492.XF_0549"/>
<dbReference type="KEGG" id="xfa:XF_0549"/>
<dbReference type="eggNOG" id="COG0073">
    <property type="taxonomic scope" value="Bacteria"/>
</dbReference>
<dbReference type="eggNOG" id="COG0143">
    <property type="taxonomic scope" value="Bacteria"/>
</dbReference>
<dbReference type="HOGENOM" id="CLU_009710_7_0_6"/>
<dbReference type="Proteomes" id="UP000000812">
    <property type="component" value="Chromosome"/>
</dbReference>
<dbReference type="GO" id="GO:0005829">
    <property type="term" value="C:cytosol"/>
    <property type="evidence" value="ECO:0007669"/>
    <property type="project" value="TreeGrafter"/>
</dbReference>
<dbReference type="GO" id="GO:0005524">
    <property type="term" value="F:ATP binding"/>
    <property type="evidence" value="ECO:0007669"/>
    <property type="project" value="UniProtKB-UniRule"/>
</dbReference>
<dbReference type="GO" id="GO:0046872">
    <property type="term" value="F:metal ion binding"/>
    <property type="evidence" value="ECO:0007669"/>
    <property type="project" value="UniProtKB-KW"/>
</dbReference>
<dbReference type="GO" id="GO:0004825">
    <property type="term" value="F:methionine-tRNA ligase activity"/>
    <property type="evidence" value="ECO:0007669"/>
    <property type="project" value="UniProtKB-UniRule"/>
</dbReference>
<dbReference type="GO" id="GO:0000049">
    <property type="term" value="F:tRNA binding"/>
    <property type="evidence" value="ECO:0007669"/>
    <property type="project" value="UniProtKB-KW"/>
</dbReference>
<dbReference type="GO" id="GO:0006431">
    <property type="term" value="P:methionyl-tRNA aminoacylation"/>
    <property type="evidence" value="ECO:0007669"/>
    <property type="project" value="UniProtKB-UniRule"/>
</dbReference>
<dbReference type="CDD" id="cd07957">
    <property type="entry name" value="Anticodon_Ia_Met"/>
    <property type="match status" value="1"/>
</dbReference>
<dbReference type="CDD" id="cd00814">
    <property type="entry name" value="MetRS_core"/>
    <property type="match status" value="1"/>
</dbReference>
<dbReference type="CDD" id="cd02800">
    <property type="entry name" value="tRNA_bind_EcMetRS_like"/>
    <property type="match status" value="1"/>
</dbReference>
<dbReference type="FunFam" id="1.10.730.10:FF:000005">
    <property type="entry name" value="Methionine--tRNA ligase"/>
    <property type="match status" value="1"/>
</dbReference>
<dbReference type="FunFam" id="2.20.28.20:FF:000001">
    <property type="entry name" value="Methionine--tRNA ligase"/>
    <property type="match status" value="1"/>
</dbReference>
<dbReference type="FunFam" id="2.40.50.140:FF:000042">
    <property type="entry name" value="Methionine--tRNA ligase"/>
    <property type="match status" value="1"/>
</dbReference>
<dbReference type="Gene3D" id="3.40.50.620">
    <property type="entry name" value="HUPs"/>
    <property type="match status" value="1"/>
</dbReference>
<dbReference type="Gene3D" id="1.10.730.10">
    <property type="entry name" value="Isoleucyl-tRNA Synthetase, Domain 1"/>
    <property type="match status" value="1"/>
</dbReference>
<dbReference type="Gene3D" id="2.20.28.20">
    <property type="entry name" value="Methionyl-tRNA synthetase, Zn-domain"/>
    <property type="match status" value="1"/>
</dbReference>
<dbReference type="Gene3D" id="2.40.50.140">
    <property type="entry name" value="Nucleic acid-binding proteins"/>
    <property type="match status" value="1"/>
</dbReference>
<dbReference type="HAMAP" id="MF_00098">
    <property type="entry name" value="Met_tRNA_synth_type1"/>
    <property type="match status" value="1"/>
</dbReference>
<dbReference type="InterPro" id="IPR001412">
    <property type="entry name" value="aa-tRNA-synth_I_CS"/>
</dbReference>
<dbReference type="InterPro" id="IPR041872">
    <property type="entry name" value="Anticodon_Met"/>
</dbReference>
<dbReference type="InterPro" id="IPR004495">
    <property type="entry name" value="Met-tRNA-synth_bsu_C"/>
</dbReference>
<dbReference type="InterPro" id="IPR023458">
    <property type="entry name" value="Met-tRNA_ligase_1"/>
</dbReference>
<dbReference type="InterPro" id="IPR014758">
    <property type="entry name" value="Met-tRNA_synth"/>
</dbReference>
<dbReference type="InterPro" id="IPR015413">
    <property type="entry name" value="Methionyl/Leucyl_tRNA_Synth"/>
</dbReference>
<dbReference type="InterPro" id="IPR033911">
    <property type="entry name" value="MetRS_core"/>
</dbReference>
<dbReference type="InterPro" id="IPR029038">
    <property type="entry name" value="MetRS_Zn"/>
</dbReference>
<dbReference type="InterPro" id="IPR012340">
    <property type="entry name" value="NA-bd_OB-fold"/>
</dbReference>
<dbReference type="InterPro" id="IPR014729">
    <property type="entry name" value="Rossmann-like_a/b/a_fold"/>
</dbReference>
<dbReference type="InterPro" id="IPR002547">
    <property type="entry name" value="tRNA-bd_dom"/>
</dbReference>
<dbReference type="InterPro" id="IPR009080">
    <property type="entry name" value="tRNAsynth_Ia_anticodon-bd"/>
</dbReference>
<dbReference type="NCBIfam" id="TIGR00398">
    <property type="entry name" value="metG"/>
    <property type="match status" value="1"/>
</dbReference>
<dbReference type="NCBIfam" id="TIGR00399">
    <property type="entry name" value="metG_C_term"/>
    <property type="match status" value="1"/>
</dbReference>
<dbReference type="NCBIfam" id="NF001100">
    <property type="entry name" value="PRK00133.1"/>
    <property type="match status" value="1"/>
</dbReference>
<dbReference type="PANTHER" id="PTHR45765">
    <property type="entry name" value="METHIONINE--TRNA LIGASE"/>
    <property type="match status" value="1"/>
</dbReference>
<dbReference type="PANTHER" id="PTHR45765:SF1">
    <property type="entry name" value="METHIONINE--TRNA LIGASE, CYTOPLASMIC"/>
    <property type="match status" value="1"/>
</dbReference>
<dbReference type="Pfam" id="PF19303">
    <property type="entry name" value="Anticodon_3"/>
    <property type="match status" value="1"/>
</dbReference>
<dbReference type="Pfam" id="PF09334">
    <property type="entry name" value="tRNA-synt_1g"/>
    <property type="match status" value="1"/>
</dbReference>
<dbReference type="Pfam" id="PF01588">
    <property type="entry name" value="tRNA_bind"/>
    <property type="match status" value="1"/>
</dbReference>
<dbReference type="PRINTS" id="PR01041">
    <property type="entry name" value="TRNASYNTHMET"/>
</dbReference>
<dbReference type="SUPFAM" id="SSF47323">
    <property type="entry name" value="Anticodon-binding domain of a subclass of class I aminoacyl-tRNA synthetases"/>
    <property type="match status" value="1"/>
</dbReference>
<dbReference type="SUPFAM" id="SSF57770">
    <property type="entry name" value="Methionyl-tRNA synthetase (MetRS), Zn-domain"/>
    <property type="match status" value="1"/>
</dbReference>
<dbReference type="SUPFAM" id="SSF50249">
    <property type="entry name" value="Nucleic acid-binding proteins"/>
    <property type="match status" value="1"/>
</dbReference>
<dbReference type="SUPFAM" id="SSF52374">
    <property type="entry name" value="Nucleotidylyl transferase"/>
    <property type="match status" value="1"/>
</dbReference>
<dbReference type="PROSITE" id="PS00178">
    <property type="entry name" value="AA_TRNA_LIGASE_I"/>
    <property type="match status" value="1"/>
</dbReference>
<dbReference type="PROSITE" id="PS50886">
    <property type="entry name" value="TRBD"/>
    <property type="match status" value="1"/>
</dbReference>
<reference key="1">
    <citation type="journal article" date="2000" name="Nature">
        <title>The genome sequence of the plant pathogen Xylella fastidiosa.</title>
        <authorList>
            <person name="Simpson A.J.G."/>
            <person name="Reinach F.C."/>
            <person name="Arruda P."/>
            <person name="Abreu F.A."/>
            <person name="Acencio M."/>
            <person name="Alvarenga R."/>
            <person name="Alves L.M.C."/>
            <person name="Araya J.E."/>
            <person name="Baia G.S."/>
            <person name="Baptista C.S."/>
            <person name="Barros M.H."/>
            <person name="Bonaccorsi E.D."/>
            <person name="Bordin S."/>
            <person name="Bove J.M."/>
            <person name="Briones M.R.S."/>
            <person name="Bueno M.R.P."/>
            <person name="Camargo A.A."/>
            <person name="Camargo L.E.A."/>
            <person name="Carraro D.M."/>
            <person name="Carrer H."/>
            <person name="Colauto N.B."/>
            <person name="Colombo C."/>
            <person name="Costa F.F."/>
            <person name="Costa M.C.R."/>
            <person name="Costa-Neto C.M."/>
            <person name="Coutinho L.L."/>
            <person name="Cristofani M."/>
            <person name="Dias-Neto E."/>
            <person name="Docena C."/>
            <person name="El-Dorry H."/>
            <person name="Facincani A.P."/>
            <person name="Ferreira A.J.S."/>
            <person name="Ferreira V.C.A."/>
            <person name="Ferro J.A."/>
            <person name="Fraga J.S."/>
            <person name="Franca S.C."/>
            <person name="Franco M.C."/>
            <person name="Frohme M."/>
            <person name="Furlan L.R."/>
            <person name="Garnier M."/>
            <person name="Goldman G.H."/>
            <person name="Goldman M.H.S."/>
            <person name="Gomes S.L."/>
            <person name="Gruber A."/>
            <person name="Ho P.L."/>
            <person name="Hoheisel J.D."/>
            <person name="Junqueira M.L."/>
            <person name="Kemper E.L."/>
            <person name="Kitajima J.P."/>
            <person name="Krieger J.E."/>
            <person name="Kuramae E.E."/>
            <person name="Laigret F."/>
            <person name="Lambais M.R."/>
            <person name="Leite L.C.C."/>
            <person name="Lemos E.G.M."/>
            <person name="Lemos M.V.F."/>
            <person name="Lopes S.A."/>
            <person name="Lopes C.R."/>
            <person name="Machado J.A."/>
            <person name="Machado M.A."/>
            <person name="Madeira A.M.B.N."/>
            <person name="Madeira H.M.F."/>
            <person name="Marino C.L."/>
            <person name="Marques M.V."/>
            <person name="Martins E.A.L."/>
            <person name="Martins E.M.F."/>
            <person name="Matsukuma A.Y."/>
            <person name="Menck C.F.M."/>
            <person name="Miracca E.C."/>
            <person name="Miyaki C.Y."/>
            <person name="Monteiro-Vitorello C.B."/>
            <person name="Moon D.H."/>
            <person name="Nagai M.A."/>
            <person name="Nascimento A.L.T.O."/>
            <person name="Netto L.E.S."/>
            <person name="Nhani A. Jr."/>
            <person name="Nobrega F.G."/>
            <person name="Nunes L.R."/>
            <person name="Oliveira M.A."/>
            <person name="de Oliveira M.C."/>
            <person name="de Oliveira R.C."/>
            <person name="Palmieri D.A."/>
            <person name="Paris A."/>
            <person name="Peixoto B.R."/>
            <person name="Pereira G.A.G."/>
            <person name="Pereira H.A. Jr."/>
            <person name="Pesquero J.B."/>
            <person name="Quaggio R.B."/>
            <person name="Roberto P.G."/>
            <person name="Rodrigues V."/>
            <person name="de Rosa A.J.M."/>
            <person name="de Rosa V.E. Jr."/>
            <person name="de Sa R.G."/>
            <person name="Santelli R.V."/>
            <person name="Sawasaki H.E."/>
            <person name="da Silva A.C.R."/>
            <person name="da Silva A.M."/>
            <person name="da Silva F.R."/>
            <person name="Silva W.A. Jr."/>
            <person name="da Silveira J.F."/>
            <person name="Silvestri M.L.Z."/>
            <person name="Siqueira W.J."/>
            <person name="de Souza A.A."/>
            <person name="de Souza A.P."/>
            <person name="Terenzi M.F."/>
            <person name="Truffi D."/>
            <person name="Tsai S.M."/>
            <person name="Tsuhako M.H."/>
            <person name="Vallada H."/>
            <person name="Van Sluys M.A."/>
            <person name="Verjovski-Almeida S."/>
            <person name="Vettore A.L."/>
            <person name="Zago M.A."/>
            <person name="Zatz M."/>
            <person name="Meidanis J."/>
            <person name="Setubal J.C."/>
        </authorList>
    </citation>
    <scope>NUCLEOTIDE SEQUENCE [LARGE SCALE GENOMIC DNA]</scope>
    <source>
        <strain>9a5c</strain>
    </source>
</reference>
<protein>
    <recommendedName>
        <fullName evidence="1">Methionine--tRNA ligase</fullName>
        <ecNumber evidence="1">6.1.1.10</ecNumber>
    </recommendedName>
    <alternativeName>
        <fullName evidence="1">Methionyl-tRNA synthetase</fullName>
        <shortName evidence="1">MetRS</shortName>
    </alternativeName>
</protein>
<proteinExistence type="inferred from homology"/>
<accession>Q9PFV8</accession>
<gene>
    <name evidence="1" type="primary">metG</name>
    <name type="ordered locus">XF_0549</name>
</gene>